<comment type="function">
    <text>Receptor for adenosine. The activity of this receptor is mediated by G proteins which activate adenylyl cyclase.</text>
</comment>
<comment type="subcellular location">
    <subcellularLocation>
        <location>Cell membrane</location>
        <topology>Multi-pass membrane protein</topology>
    </subcellularLocation>
</comment>
<comment type="similarity">
    <text evidence="4">Belongs to the G-protein coupled receptor 1 family.</text>
</comment>
<gene>
    <name type="primary">Adora2b</name>
</gene>
<protein>
    <recommendedName>
        <fullName>Adenosine receptor A2b</fullName>
    </recommendedName>
</protein>
<accession>P29276</accession>
<keyword id="KW-1003">Cell membrane</keyword>
<keyword id="KW-1015">Disulfide bond</keyword>
<keyword id="KW-0297">G-protein coupled receptor</keyword>
<keyword id="KW-0325">Glycoprotein</keyword>
<keyword id="KW-0449">Lipoprotein</keyword>
<keyword id="KW-0472">Membrane</keyword>
<keyword id="KW-0564">Palmitate</keyword>
<keyword id="KW-0675">Receptor</keyword>
<keyword id="KW-1185">Reference proteome</keyword>
<keyword id="KW-0807">Transducer</keyword>
<keyword id="KW-0812">Transmembrane</keyword>
<keyword id="KW-1133">Transmembrane helix</keyword>
<organism>
    <name type="scientific">Rattus norvegicus</name>
    <name type="common">Rat</name>
    <dbReference type="NCBI Taxonomy" id="10116"/>
    <lineage>
        <taxon>Eukaryota</taxon>
        <taxon>Metazoa</taxon>
        <taxon>Chordata</taxon>
        <taxon>Craniata</taxon>
        <taxon>Vertebrata</taxon>
        <taxon>Euteleostomi</taxon>
        <taxon>Mammalia</taxon>
        <taxon>Eutheria</taxon>
        <taxon>Euarchontoglires</taxon>
        <taxon>Glires</taxon>
        <taxon>Rodentia</taxon>
        <taxon>Myomorpha</taxon>
        <taxon>Muroidea</taxon>
        <taxon>Muridae</taxon>
        <taxon>Murinae</taxon>
        <taxon>Rattus</taxon>
    </lineage>
</organism>
<feature type="chain" id="PRO_0000069005" description="Adenosine receptor A2b">
    <location>
        <begin position="1"/>
        <end position="332"/>
    </location>
</feature>
<feature type="topological domain" description="Extracellular" evidence="1">
    <location>
        <begin position="1"/>
        <end position="8"/>
    </location>
</feature>
<feature type="transmembrane region" description="Helical; Name=1" evidence="1">
    <location>
        <begin position="9"/>
        <end position="33"/>
    </location>
</feature>
<feature type="topological domain" description="Cytoplasmic" evidence="1">
    <location>
        <begin position="34"/>
        <end position="43"/>
    </location>
</feature>
<feature type="transmembrane region" description="Helical; Name=2" evidence="1">
    <location>
        <begin position="44"/>
        <end position="67"/>
    </location>
</feature>
<feature type="topological domain" description="Extracellular" evidence="1">
    <location>
        <begin position="68"/>
        <end position="78"/>
    </location>
</feature>
<feature type="transmembrane region" description="Helical; Name=3" evidence="1">
    <location>
        <begin position="79"/>
        <end position="101"/>
    </location>
</feature>
<feature type="topological domain" description="Cytoplasmic" evidence="1">
    <location>
        <begin position="102"/>
        <end position="121"/>
    </location>
</feature>
<feature type="transmembrane region" description="Helical; Name=4" evidence="1">
    <location>
        <begin position="122"/>
        <end position="144"/>
    </location>
</feature>
<feature type="topological domain" description="Extracellular" evidence="1">
    <location>
        <begin position="145"/>
        <end position="178"/>
    </location>
</feature>
<feature type="transmembrane region" description="Helical; Name=5" evidence="1">
    <location>
        <begin position="179"/>
        <end position="203"/>
    </location>
</feature>
<feature type="topological domain" description="Cytoplasmic" evidence="1">
    <location>
        <begin position="204"/>
        <end position="235"/>
    </location>
</feature>
<feature type="transmembrane region" description="Helical; Name=6" evidence="1">
    <location>
        <begin position="236"/>
        <end position="259"/>
    </location>
</feature>
<feature type="topological domain" description="Extracellular" evidence="1">
    <location>
        <begin position="260"/>
        <end position="267"/>
    </location>
</feature>
<feature type="transmembrane region" description="Helical; Name=7" evidence="1">
    <location>
        <begin position="268"/>
        <end position="291"/>
    </location>
</feature>
<feature type="topological domain" description="Cytoplasmic" evidence="1">
    <location>
        <begin position="292"/>
        <end position="332"/>
    </location>
</feature>
<feature type="binding site" evidence="2">
    <location>
        <position position="174"/>
    </location>
    <ligand>
        <name>adenosine</name>
        <dbReference type="ChEBI" id="CHEBI:16335"/>
        <note>agonist</note>
    </ligand>
</feature>
<feature type="binding site" evidence="2">
    <location>
        <position position="254"/>
    </location>
    <ligand>
        <name>adenosine</name>
        <dbReference type="ChEBI" id="CHEBI:16335"/>
        <note>agonist</note>
    </ligand>
</feature>
<feature type="binding site" evidence="2">
    <location>
        <position position="279"/>
    </location>
    <ligand>
        <name>adenosine</name>
        <dbReference type="ChEBI" id="CHEBI:16335"/>
        <note>agonist</note>
    </ligand>
</feature>
<feature type="binding site" evidence="2">
    <location>
        <position position="280"/>
    </location>
    <ligand>
        <name>adenosine</name>
        <dbReference type="ChEBI" id="CHEBI:16335"/>
        <note>agonist</note>
    </ligand>
</feature>
<feature type="lipid moiety-binding region" description="S-palmitoyl cysteine" evidence="3">
    <location>
        <position position="311"/>
    </location>
</feature>
<feature type="glycosylation site" description="N-linked (GlcNAc...) asparagine" evidence="3">
    <location>
        <position position="153"/>
    </location>
</feature>
<feature type="glycosylation site" description="N-linked (GlcNAc...) asparagine" evidence="3">
    <location>
        <position position="163"/>
    </location>
</feature>
<feature type="disulfide bond" evidence="4">
    <location>
        <begin position="78"/>
        <end position="171"/>
    </location>
</feature>
<dbReference type="EMBL" id="M91466">
    <property type="protein sequence ID" value="AAA20981.1"/>
    <property type="molecule type" value="mRNA"/>
</dbReference>
<dbReference type="PIR" id="A42171">
    <property type="entry name" value="A42171"/>
</dbReference>
<dbReference type="RefSeq" id="NP_058857.1">
    <property type="nucleotide sequence ID" value="NM_017161.1"/>
</dbReference>
<dbReference type="SMR" id="P29276"/>
<dbReference type="FunCoup" id="P29276">
    <property type="interactions" value="492"/>
</dbReference>
<dbReference type="IntAct" id="P29276">
    <property type="interactions" value="1"/>
</dbReference>
<dbReference type="STRING" id="10116.ENSRNOP00000003966"/>
<dbReference type="BindingDB" id="P29276"/>
<dbReference type="ChEMBL" id="CHEMBL2592"/>
<dbReference type="DrugCentral" id="P29276"/>
<dbReference type="GuidetoPHARMACOLOGY" id="20"/>
<dbReference type="GlyCosmos" id="P29276">
    <property type="glycosylation" value="2 sites, No reported glycans"/>
</dbReference>
<dbReference type="GlyGen" id="P29276">
    <property type="glycosylation" value="2 sites"/>
</dbReference>
<dbReference type="PhosphoSitePlus" id="P29276"/>
<dbReference type="PaxDb" id="10116-ENSRNOP00000003966"/>
<dbReference type="GeneID" id="29316"/>
<dbReference type="KEGG" id="rno:29316"/>
<dbReference type="UCSC" id="RGD:2050">
    <property type="organism name" value="rat"/>
</dbReference>
<dbReference type="AGR" id="RGD:2050"/>
<dbReference type="CTD" id="136"/>
<dbReference type="RGD" id="2050">
    <property type="gene designation" value="Adora2b"/>
</dbReference>
<dbReference type="eggNOG" id="KOG3656">
    <property type="taxonomic scope" value="Eukaryota"/>
</dbReference>
<dbReference type="InParanoid" id="P29276"/>
<dbReference type="PhylomeDB" id="P29276"/>
<dbReference type="Reactome" id="R-RNO-417973">
    <property type="pathway name" value="Adenosine P1 receptors"/>
</dbReference>
<dbReference type="Reactome" id="R-RNO-5683826">
    <property type="pathway name" value="Surfactant metabolism"/>
</dbReference>
<dbReference type="PRO" id="PR:P29276"/>
<dbReference type="Proteomes" id="UP000002494">
    <property type="component" value="Unplaced"/>
</dbReference>
<dbReference type="GO" id="GO:0009986">
    <property type="term" value="C:cell surface"/>
    <property type="evidence" value="ECO:0000314"/>
    <property type="project" value="RGD"/>
</dbReference>
<dbReference type="GO" id="GO:0098978">
    <property type="term" value="C:glutamatergic synapse"/>
    <property type="evidence" value="ECO:0000266"/>
    <property type="project" value="RGD"/>
</dbReference>
<dbReference type="GO" id="GO:0005886">
    <property type="term" value="C:plasma membrane"/>
    <property type="evidence" value="ECO:0000266"/>
    <property type="project" value="RGD"/>
</dbReference>
<dbReference type="GO" id="GO:0098793">
    <property type="term" value="C:presynapse"/>
    <property type="evidence" value="ECO:0007669"/>
    <property type="project" value="GOC"/>
</dbReference>
<dbReference type="GO" id="GO:0098685">
    <property type="term" value="C:Schaffer collateral - CA1 synapse"/>
    <property type="evidence" value="ECO:0000266"/>
    <property type="project" value="RGD"/>
</dbReference>
<dbReference type="GO" id="GO:0045202">
    <property type="term" value="C:synapse"/>
    <property type="evidence" value="ECO:0000266"/>
    <property type="project" value="RGD"/>
</dbReference>
<dbReference type="GO" id="GO:0001609">
    <property type="term" value="F:G protein-coupled adenosine receptor activity"/>
    <property type="evidence" value="ECO:0000266"/>
    <property type="project" value="RGD"/>
</dbReference>
<dbReference type="GO" id="GO:0004930">
    <property type="term" value="F:G protein-coupled receptor activity"/>
    <property type="evidence" value="ECO:0000266"/>
    <property type="project" value="RGD"/>
</dbReference>
<dbReference type="GO" id="GO:0007189">
    <property type="term" value="P:adenylate cyclase-activating G protein-coupled receptor signaling pathway"/>
    <property type="evidence" value="ECO:0000266"/>
    <property type="project" value="RGD"/>
</dbReference>
<dbReference type="GO" id="GO:0019934">
    <property type="term" value="P:cGMP-mediated signaling"/>
    <property type="evidence" value="ECO:0000266"/>
    <property type="project" value="RGD"/>
</dbReference>
<dbReference type="GO" id="GO:0001973">
    <property type="term" value="P:G protein-coupled adenosine receptor signaling pathway"/>
    <property type="evidence" value="ECO:0000266"/>
    <property type="project" value="RGD"/>
</dbReference>
<dbReference type="GO" id="GO:0043303">
    <property type="term" value="P:mast cell degranulation"/>
    <property type="evidence" value="ECO:0000266"/>
    <property type="project" value="RGD"/>
</dbReference>
<dbReference type="GO" id="GO:0008285">
    <property type="term" value="P:negative regulation of cell population proliferation"/>
    <property type="evidence" value="ECO:0000315"/>
    <property type="project" value="RGD"/>
</dbReference>
<dbReference type="GO" id="GO:0032966">
    <property type="term" value="P:negative regulation of collagen biosynthetic process"/>
    <property type="evidence" value="ECO:0000315"/>
    <property type="project" value="RGD"/>
</dbReference>
<dbReference type="GO" id="GO:0141163">
    <property type="term" value="P:positive regulation of cAMP/PKA signal transduction"/>
    <property type="evidence" value="ECO:0000315"/>
    <property type="project" value="RGD"/>
</dbReference>
<dbReference type="GO" id="GO:0033605">
    <property type="term" value="P:positive regulation of catecholamine secretion"/>
    <property type="evidence" value="ECO:0000315"/>
    <property type="project" value="RGD"/>
</dbReference>
<dbReference type="GO" id="GO:0008284">
    <property type="term" value="P:positive regulation of cell population proliferation"/>
    <property type="evidence" value="ECO:0000315"/>
    <property type="project" value="RGD"/>
</dbReference>
<dbReference type="GO" id="GO:0010753">
    <property type="term" value="P:positive regulation of cGMP-mediated signaling"/>
    <property type="evidence" value="ECO:0000266"/>
    <property type="project" value="RGD"/>
</dbReference>
<dbReference type="GO" id="GO:0032722">
    <property type="term" value="P:positive regulation of chemokine production"/>
    <property type="evidence" value="ECO:0000266"/>
    <property type="project" value="RGD"/>
</dbReference>
<dbReference type="GO" id="GO:0002882">
    <property type="term" value="P:positive regulation of chronic inflammatory response to non-antigenic stimulus"/>
    <property type="evidence" value="ECO:0000266"/>
    <property type="project" value="RGD"/>
</dbReference>
<dbReference type="GO" id="GO:0010595">
    <property type="term" value="P:positive regulation of endothelial cell migration"/>
    <property type="evidence" value="ECO:0000315"/>
    <property type="project" value="RGD"/>
</dbReference>
<dbReference type="GO" id="GO:0001938">
    <property type="term" value="P:positive regulation of endothelial cell proliferation"/>
    <property type="evidence" value="ECO:0000315"/>
    <property type="project" value="RGD"/>
</dbReference>
<dbReference type="GO" id="GO:0032755">
    <property type="term" value="P:positive regulation of interleukin-6 production"/>
    <property type="evidence" value="ECO:0000315"/>
    <property type="project" value="RGD"/>
</dbReference>
<dbReference type="GO" id="GO:0043306">
    <property type="term" value="P:positive regulation of mast cell degranulation"/>
    <property type="evidence" value="ECO:0000266"/>
    <property type="project" value="RGD"/>
</dbReference>
<dbReference type="GO" id="GO:0010701">
    <property type="term" value="P:positive regulation of norepinephrine secretion"/>
    <property type="evidence" value="ECO:0000315"/>
    <property type="project" value="RGD"/>
</dbReference>
<dbReference type="GO" id="GO:0010893">
    <property type="term" value="P:positive regulation of steroid biosynthetic process"/>
    <property type="evidence" value="ECO:0000315"/>
    <property type="project" value="RGD"/>
</dbReference>
<dbReference type="GO" id="GO:0010575">
    <property type="term" value="P:positive regulation of vascular endothelial growth factor production"/>
    <property type="evidence" value="ECO:0000266"/>
    <property type="project" value="RGD"/>
</dbReference>
<dbReference type="GO" id="GO:0099171">
    <property type="term" value="P:presynaptic modulation of chemical synaptic transmission"/>
    <property type="evidence" value="ECO:0000266"/>
    <property type="project" value="RGD"/>
</dbReference>
<dbReference type="GO" id="GO:0010906">
    <property type="term" value="P:regulation of glucose metabolic process"/>
    <property type="evidence" value="ECO:0000315"/>
    <property type="project" value="RGD"/>
</dbReference>
<dbReference type="GO" id="GO:0060087">
    <property type="term" value="P:relaxation of vascular associated smooth muscle"/>
    <property type="evidence" value="ECO:0000266"/>
    <property type="project" value="RGD"/>
</dbReference>
<dbReference type="GO" id="GO:1990776">
    <property type="term" value="P:response to angiotensin"/>
    <property type="evidence" value="ECO:0000315"/>
    <property type="project" value="RGD"/>
</dbReference>
<dbReference type="GO" id="GO:0042311">
    <property type="term" value="P:vasodilation"/>
    <property type="evidence" value="ECO:0000314"/>
    <property type="project" value="RGD"/>
</dbReference>
<dbReference type="FunFam" id="1.20.1070.10:FF:000061">
    <property type="entry name" value="Adenosine receptor A2"/>
    <property type="match status" value="1"/>
</dbReference>
<dbReference type="Gene3D" id="1.20.1070.10">
    <property type="entry name" value="Rhodopsin 7-helix transmembrane proteins"/>
    <property type="match status" value="1"/>
</dbReference>
<dbReference type="InterPro" id="IPR001435">
    <property type="entry name" value="Adeno_A2B_rcpt"/>
</dbReference>
<dbReference type="InterPro" id="IPR001634">
    <property type="entry name" value="Adenosn_rcpt"/>
</dbReference>
<dbReference type="InterPro" id="IPR000276">
    <property type="entry name" value="GPCR_Rhodpsn"/>
</dbReference>
<dbReference type="InterPro" id="IPR017452">
    <property type="entry name" value="GPCR_Rhodpsn_7TM"/>
</dbReference>
<dbReference type="PANTHER" id="PTHR24246:SF18">
    <property type="entry name" value="ADENOSINE RECEPTOR A2B"/>
    <property type="match status" value="1"/>
</dbReference>
<dbReference type="PANTHER" id="PTHR24246">
    <property type="entry name" value="OLFACTORY RECEPTOR AND ADENOSINE RECEPTOR"/>
    <property type="match status" value="1"/>
</dbReference>
<dbReference type="Pfam" id="PF00001">
    <property type="entry name" value="7tm_1"/>
    <property type="match status" value="1"/>
</dbReference>
<dbReference type="PRINTS" id="PR00554">
    <property type="entry name" value="ADENOSINA2BR"/>
</dbReference>
<dbReference type="PRINTS" id="PR00424">
    <property type="entry name" value="ADENOSINER"/>
</dbReference>
<dbReference type="PRINTS" id="PR00237">
    <property type="entry name" value="GPCRRHODOPSN"/>
</dbReference>
<dbReference type="SMART" id="SM01381">
    <property type="entry name" value="7TM_GPCR_Srsx"/>
    <property type="match status" value="1"/>
</dbReference>
<dbReference type="SUPFAM" id="SSF81321">
    <property type="entry name" value="Family A G protein-coupled receptor-like"/>
    <property type="match status" value="1"/>
</dbReference>
<dbReference type="PROSITE" id="PS00237">
    <property type="entry name" value="G_PROTEIN_RECEP_F1_1"/>
    <property type="match status" value="1"/>
</dbReference>
<dbReference type="PROSITE" id="PS50262">
    <property type="entry name" value="G_PROTEIN_RECEP_F1_2"/>
    <property type="match status" value="1"/>
</dbReference>
<name>AA2BR_RAT</name>
<sequence length="332" mass="36367">MQLETQDALYVALELVIAALAVAGNVLVCAAVGASSALQTPTNYFLVSLATADVAVGLFAIPFAITISLGFCTDFHSCLFLACFVLVLTQSSIFSLLAVAVDRYLAIRVPLRYKGLVTGTRARGIIAVLWVLAFGIGLTPFLGWNSKDRATSNCTEPGDGITNKSCCPVKCLFENVVPMSYMVYFNFFGCVLPPLLIMMVIYIKIFMVACKQLQHMELMEHSRTTLQREIHAAKSLAMIVGIFALCWLPVHAINCITLFHPALAKDKPKWVMNVAILLSHANSVVNPIVYAYRNRDFRYSFHRIISRYVLCQTDTKGGSGQAGGQSTFSLSL</sequence>
<proteinExistence type="evidence at protein level"/>
<evidence type="ECO:0000250" key="1"/>
<evidence type="ECO:0000250" key="2">
    <source>
        <dbReference type="UniProtKB" id="P29274"/>
    </source>
</evidence>
<evidence type="ECO:0000255" key="3"/>
<evidence type="ECO:0000255" key="4">
    <source>
        <dbReference type="PROSITE-ProRule" id="PRU00521"/>
    </source>
</evidence>
<reference key="1">
    <citation type="journal article" date="1992" name="Mol. Endocrinol.">
        <title>Molecular cloning and expression of the cDNA for a novel A2-adenosine receptor subtype.</title>
        <authorList>
            <person name="Stehle J.H."/>
            <person name="Rivkees S.A."/>
            <person name="Lee J.J."/>
            <person name="Weaver D.R."/>
            <person name="Deeds J.D."/>
            <person name="Reppert S.M."/>
        </authorList>
    </citation>
    <scope>NUCLEOTIDE SEQUENCE [MRNA]</scope>
    <source>
        <tissue>Brain</tissue>
    </source>
</reference>
<reference key="2">
    <citation type="journal article" date="1992" name="Mol. Endocrinol.">
        <title>RFL9 encodes an A2b-adenosine receptor.</title>
        <authorList>
            <person name="Rivkees S.A."/>
            <person name="Reppert S.M."/>
        </authorList>
    </citation>
    <scope>CHARACTERIZATION</scope>
</reference>